<sequence length="11" mass="1114">GASGLIPVMRN</sequence>
<proteinExistence type="evidence at protein level"/>
<reference evidence="4" key="1">
    <citation type="journal article" date="2009" name="BMC Evol. Biol.">
        <title>A proteomic approach for studying insect phylogeny: CAPA peptides of ancient insect taxa (Dictyoptera, Blattoptera) as a test case.</title>
        <authorList>
            <person name="Roth S."/>
            <person name="Fromm B."/>
            <person name="Gaede G."/>
            <person name="Predel R."/>
        </authorList>
    </citation>
    <scope>PROTEIN SEQUENCE</scope>
    <scope>AMIDATION AT ASN-11</scope>
    <source>
        <tissue evidence="2">Abdominal perisympathetic organs</tissue>
    </source>
</reference>
<comment type="function">
    <text evidence="4">Mediates visceral muscle contractile activity (myotropic activity).</text>
</comment>
<comment type="subcellular location">
    <subcellularLocation>
        <location evidence="4">Secreted</location>
    </subcellularLocation>
</comment>
<comment type="similarity">
    <text evidence="1">Belongs to the periviscerokinin family.</text>
</comment>
<organism>
    <name type="scientific">Blatta orientalis</name>
    <name type="common">Oriental cockroach</name>
    <dbReference type="NCBI Taxonomy" id="6976"/>
    <lineage>
        <taxon>Eukaryota</taxon>
        <taxon>Metazoa</taxon>
        <taxon>Ecdysozoa</taxon>
        <taxon>Arthropoda</taxon>
        <taxon>Hexapoda</taxon>
        <taxon>Insecta</taxon>
        <taxon>Pterygota</taxon>
        <taxon>Neoptera</taxon>
        <taxon>Polyneoptera</taxon>
        <taxon>Dictyoptera</taxon>
        <taxon>Blattodea</taxon>
        <taxon>Blattoidea</taxon>
        <taxon>Blattidae</taxon>
        <taxon>Blattinae</taxon>
        <taxon>Blatta</taxon>
    </lineage>
</organism>
<feature type="peptide" id="PRO_0000378731" description="Periviscerokinin-1" evidence="2">
    <location>
        <begin position="1"/>
        <end position="11"/>
    </location>
</feature>
<feature type="modified residue" description="Asparagine amide" evidence="2">
    <location>
        <position position="11"/>
    </location>
</feature>
<evidence type="ECO:0000255" key="1"/>
<evidence type="ECO:0000269" key="2">
    <source>
    </source>
</evidence>
<evidence type="ECO:0000303" key="3">
    <source>
    </source>
</evidence>
<evidence type="ECO:0000305" key="4"/>
<name>PVK1_BLAOR</name>
<dbReference type="GO" id="GO:0005576">
    <property type="term" value="C:extracellular region"/>
    <property type="evidence" value="ECO:0007669"/>
    <property type="project" value="UniProtKB-SubCell"/>
</dbReference>
<dbReference type="GO" id="GO:0007218">
    <property type="term" value="P:neuropeptide signaling pathway"/>
    <property type="evidence" value="ECO:0007669"/>
    <property type="project" value="UniProtKB-KW"/>
</dbReference>
<keyword id="KW-0027">Amidation</keyword>
<keyword id="KW-0903">Direct protein sequencing</keyword>
<keyword id="KW-0527">Neuropeptide</keyword>
<keyword id="KW-0964">Secreted</keyword>
<accession>P85558</accession>
<protein>
    <recommendedName>
        <fullName evidence="3">Periviscerokinin-1</fullName>
        <shortName evidence="3">BlaOr-PVK-1</shortName>
    </recommendedName>
</protein>